<feature type="chain" id="PRO_0000119217" description="V-type proton ATPase 116 kDa subunit a 2">
    <location>
        <begin position="1"/>
        <end position="856"/>
    </location>
</feature>
<feature type="topological domain" description="Cytoplasmic" evidence="4">
    <location>
        <begin position="1"/>
        <end position="393"/>
    </location>
</feature>
<feature type="transmembrane region" description="Helical" evidence="4">
    <location>
        <begin position="394"/>
        <end position="412"/>
    </location>
</feature>
<feature type="topological domain" description="Vacuolar" evidence="4">
    <location>
        <begin position="413"/>
        <end position="414"/>
    </location>
</feature>
<feature type="transmembrane region" description="Helical" evidence="4">
    <location>
        <begin position="415"/>
        <end position="431"/>
    </location>
</feature>
<feature type="topological domain" description="Cytoplasmic" evidence="4">
    <location>
        <begin position="432"/>
        <end position="445"/>
    </location>
</feature>
<feature type="transmembrane region" description="Helical" evidence="4">
    <location>
        <begin position="446"/>
        <end position="475"/>
    </location>
</feature>
<feature type="topological domain" description="Vacuolar" evidence="4">
    <location>
        <begin position="476"/>
        <end position="549"/>
    </location>
</feature>
<feature type="transmembrane region" description="Helical" evidence="4">
    <location>
        <begin position="550"/>
        <end position="569"/>
    </location>
</feature>
<feature type="topological domain" description="Cytoplasmic" evidence="4">
    <location>
        <begin position="570"/>
        <end position="587"/>
    </location>
</feature>
<feature type="transmembrane region" description="Helical" evidence="4">
    <location>
        <begin position="588"/>
        <end position="608"/>
    </location>
</feature>
<feature type="topological domain" description="Vacuolar" evidence="4">
    <location>
        <begin position="609"/>
        <end position="651"/>
    </location>
</feature>
<feature type="transmembrane region" description="Helical" evidence="4">
    <location>
        <begin position="652"/>
        <end position="671"/>
    </location>
</feature>
<feature type="topological domain" description="Cytoplasmic" evidence="4">
    <location>
        <begin position="672"/>
        <end position="739"/>
    </location>
</feature>
<feature type="transmembrane region" description="Helical" evidence="4">
    <location>
        <begin position="740"/>
        <end position="764"/>
    </location>
</feature>
<feature type="topological domain" description="Vacuolar" evidence="4">
    <location>
        <begin position="765"/>
        <end position="785"/>
    </location>
</feature>
<feature type="transmembrane region" description="Helical" evidence="4">
    <location>
        <begin position="786"/>
        <end position="824"/>
    </location>
</feature>
<feature type="topological domain" description="Cytoplasmic" evidence="4">
    <location>
        <begin position="825"/>
        <end position="856"/>
    </location>
</feature>
<feature type="modified residue" description="Phosphoserine" evidence="9 10">
    <location>
        <position position="695"/>
    </location>
</feature>
<feature type="modified residue" description="Phosphoserine" evidence="9 10">
    <location>
        <position position="700"/>
    </location>
</feature>
<feature type="splice variant" id="VSP_032088" description="In isoform 2." evidence="7">
    <location>
        <begin position="1"/>
        <end position="593"/>
    </location>
</feature>
<feature type="sequence conflict" description="In Ref. 1; AAA39336/CAA38968." evidence="8" ref="1">
    <original>S</original>
    <variation>C</variation>
    <location>
        <position position="486"/>
    </location>
</feature>
<feature type="sequence conflict" description="In Ref. 1; AAA39336/CAA38968." evidence="8" ref="1">
    <location>
        <position position="791"/>
    </location>
</feature>
<feature type="helix" evidence="11">
    <location>
        <begin position="4"/>
        <end position="16"/>
    </location>
</feature>
<evidence type="ECO:0000250" key="1">
    <source>
        <dbReference type="UniProtKB" id="Q29466"/>
    </source>
</evidence>
<evidence type="ECO:0000250" key="2">
    <source>
        <dbReference type="UniProtKB" id="Q93050"/>
    </source>
</evidence>
<evidence type="ECO:0000250" key="3">
    <source>
        <dbReference type="UniProtKB" id="Q9Y487"/>
    </source>
</evidence>
<evidence type="ECO:0000255" key="4"/>
<evidence type="ECO:0000269" key="5">
    <source>
    </source>
</evidence>
<evidence type="ECO:0000269" key="6">
    <source>
    </source>
</evidence>
<evidence type="ECO:0000303" key="7">
    <source>
    </source>
</evidence>
<evidence type="ECO:0000305" key="8"/>
<evidence type="ECO:0007744" key="9">
    <source>
    </source>
</evidence>
<evidence type="ECO:0007744" key="10">
    <source>
    </source>
</evidence>
<evidence type="ECO:0007829" key="11">
    <source>
        <dbReference type="PDB" id="2LX4"/>
    </source>
</evidence>
<name>VPP2_MOUSE</name>
<sequence length="856" mass="98145">MGSLFRSESMCLAQLFLQSGTAYECLSALGEKGLVQFRDLNQNVSSFQRKFVGEVKRCEELERILVYLVQEITRADIPLPEGEASPPAPPLKHVLEMQEQLQKLEVELREVTKNKEKLRKNLLELVEYTHMLRVTKTFLKRNVEFEPTYEEFPALENDSLLDYSCMQRLGAKLGFVSGLIQQGRVEAFERMLWRACKGYTIVTYAELDECLEDPETGEVIKWYVFLISFWGEQIGHKVKKICDCYHCHIYPYPNTAEERREIQEGLNTRIQDLYTVLHKTEDYLRQVLCKAAESVCSRVVQVRKMKAIYHMLNMCSFDVTNKCLIAEVWCPEVDLPGLRRALEEGSRESGATIPSFMNTIPTKETPPTLIRTNKFTEGFQNIVDAYGVGSYREVNPALFTIITFPFLFAVMFGDFGHGFVMFLFALLLVLNENHPRLSQSQEILRMFFDGRYILLLMGLFSVYTGLIYNDCFSKSVNLFGSGWNVSAMYSSSHSPEEQRKMVLWNDSTIRHSRTLQLDPNIPGVFRGPYPFGIDPIWNLATNRLTFLNSFKMKMSVILGIFHMTFGVVLGIFNHLHFRKKFNVYLVSVPEILFMLCIFGYLIFMIIYKWLAYSAETSREAPSILIEFINMFLFPTSKTHGLYPGQAHVQRVLVALTVLAVPVLFLGKPLFLLWLHNGRNCFGMSRSGYTLVRKDSEEEVSLLGNQDIEEGNSRMEEGCREVTCEEFNFGEILMTQAIHSIEYCLGCISNTASYLRLWALSLAHAQLSDVLWAMLMRVGLRVDTTYGVLLLLPVMAFFAVLTIFILLVMEGLSAFLHAIRLHWVEFQNKFYVGAGTKFVPFSFSLLSSKFSNDDSIA</sequence>
<organism>
    <name type="scientific">Mus musculus</name>
    <name type="common">Mouse</name>
    <dbReference type="NCBI Taxonomy" id="10090"/>
    <lineage>
        <taxon>Eukaryota</taxon>
        <taxon>Metazoa</taxon>
        <taxon>Chordata</taxon>
        <taxon>Craniata</taxon>
        <taxon>Vertebrata</taxon>
        <taxon>Euteleostomi</taxon>
        <taxon>Mammalia</taxon>
        <taxon>Eutheria</taxon>
        <taxon>Euarchontoglires</taxon>
        <taxon>Glires</taxon>
        <taxon>Rodentia</taxon>
        <taxon>Myomorpha</taxon>
        <taxon>Muroidea</taxon>
        <taxon>Muridae</taxon>
        <taxon>Murinae</taxon>
        <taxon>Mus</taxon>
        <taxon>Mus</taxon>
    </lineage>
</organism>
<comment type="function">
    <text evidence="1 2 3 6">Subunit of the V0 complex of vacuolar(H+)-ATPase (V-ATPase), a multisubunit enzyme composed of a peripheral complex (V1) that hydrolyzes ATP and a membrane integral complex (V0) that translocates protons (By similarity). V-ATPase is responsible for acidifying and maintaining the pH of intracellular compartments and in some cell types, is targeted to the plasma membrane, where it is responsible for acidifying the extracellular environment (By similarity). Essential component of the endosomal pH-sensing machinery (PubMed:16415858). May play a role in maintaining the Golgi functions, such as glycosylation maturation, by controlling the Golgi pH (By similarity). In aerobic conditions, involved in intracellular iron homeostasis, thus triggering the activity of Fe(2+) prolyl hydroxylase (PHD) enzymes, and leading to HIF1A hydroxylation and subsequent proteasomal degradation (By similarity).</text>
</comment>
<comment type="subunit">
    <text evidence="2 3 6">V-ATPase is a heteromultimeric enzyme made up of two complexes: the ATP-hydrolytic V1 complex and the proton translocation V0 complex (By similarity). The V1 complex consists of three catalytic AB heterodimers that form a heterohexamer, three peripheral stalks each consisting of EG heterodimers, one central rotor including subunits D and F, and the regulatory subunits C and H (By similarity). The proton translocation complex V0 consists of the proton transport subunit a, a ring of proteolipid subunits c9c'', rotary subunit d, subunits e and f, and the accessory subunits ATP6AP1/Ac45 and ATP6AP2/PRR (By similarity). Directly interacts with PSCD2 through its N-terminal cytosolic tail in an intra-endosomal acidification-dependent manner (PubMed:16415858). Disruption of this interaction results in the inhibition of endocytosis (PubMed:16415858). Interacts with SPAAR (By similarity).</text>
</comment>
<comment type="interaction">
    <interactant intactId="EBI-988456">
        <id>P15920</id>
    </interactant>
    <interactant intactId="EBI-988425">
        <id>P63034</id>
        <label>Cyth2</label>
    </interactant>
    <organismsDiffer>false</organismsDiffer>
    <experiments>5</experiments>
</comment>
<comment type="subcellular location">
    <subcellularLocation>
        <location evidence="6">Cell membrane</location>
        <topology evidence="6">Multi-pass membrane protein</topology>
    </subcellularLocation>
    <subcellularLocation>
        <location evidence="6">Endosome membrane</location>
    </subcellularLocation>
    <text>In kidney proximal tubules, detected in subapical early endosomes.</text>
</comment>
<comment type="alternative products">
    <event type="alternative splicing"/>
    <isoform>
        <id>P15920-1</id>
        <name>1</name>
        <sequence type="displayed"/>
    </isoform>
    <isoform>
        <id>P15920-2</id>
        <name>2</name>
        <sequence type="described" ref="VSP_032088"/>
    </isoform>
</comment>
<comment type="tissue specificity">
    <text evidence="5">Relatively high expression in kidney and liver. Lower levels in the spleen, testis, and skeletal muscle. Also expressed in the thymus.</text>
</comment>
<comment type="similarity">
    <text evidence="8">Belongs to the V-ATPase 116 kDa subunit family.</text>
</comment>
<comment type="sequence caution" evidence="8">
    <conflict type="erroneous initiation">
        <sequence resource="EMBL-CDS" id="AAL57303"/>
    </conflict>
</comment>
<keyword id="KW-0002">3D-structure</keyword>
<keyword id="KW-0025">Alternative splicing</keyword>
<keyword id="KW-1003">Cell membrane</keyword>
<keyword id="KW-0967">Endosome</keyword>
<keyword id="KW-0375">Hydrogen ion transport</keyword>
<keyword id="KW-0406">Ion transport</keyword>
<keyword id="KW-0472">Membrane</keyword>
<keyword id="KW-0597">Phosphoprotein</keyword>
<keyword id="KW-1185">Reference proteome</keyword>
<keyword id="KW-0812">Transmembrane</keyword>
<keyword id="KW-1133">Transmembrane helix</keyword>
<keyword id="KW-0813">Transport</keyword>
<accession>P15920</accession>
<accession>A4FU82</accession>
<accession>Q3U2X3</accession>
<accession>Q8VHU0</accession>
<accession>Q9JHJ2</accession>
<dbReference type="EMBL" id="M31226">
    <property type="protein sequence ID" value="AAA39336.1"/>
    <property type="molecule type" value="mRNA"/>
</dbReference>
<dbReference type="EMBL" id="X55184">
    <property type="protein sequence ID" value="CAA38968.1"/>
    <property type="molecule type" value="mRNA"/>
</dbReference>
<dbReference type="EMBL" id="AB022323">
    <property type="protein sequence ID" value="BAA93007.1"/>
    <property type="molecule type" value="mRNA"/>
</dbReference>
<dbReference type="EMBL" id="AF218252">
    <property type="protein sequence ID" value="AAF59921.1"/>
    <property type="molecule type" value="mRNA"/>
</dbReference>
<dbReference type="EMBL" id="AK032909">
    <property type="protein sequence ID" value="BAC28081.1"/>
    <property type="molecule type" value="mRNA"/>
</dbReference>
<dbReference type="EMBL" id="AK155055">
    <property type="protein sequence ID" value="BAE33017.1"/>
    <property type="molecule type" value="mRNA"/>
</dbReference>
<dbReference type="EMBL" id="BC108991">
    <property type="protein sequence ID" value="AAI08992.1"/>
    <property type="molecule type" value="mRNA"/>
</dbReference>
<dbReference type="EMBL" id="BC108992">
    <property type="protein sequence ID" value="AAI08993.1"/>
    <property type="molecule type" value="mRNA"/>
</dbReference>
<dbReference type="EMBL" id="BC112905">
    <property type="protein sequence ID" value="AAI12906.1"/>
    <property type="molecule type" value="mRNA"/>
</dbReference>
<dbReference type="EMBL" id="AF388674">
    <property type="protein sequence ID" value="AAL57303.1"/>
    <property type="status" value="ALT_INIT"/>
    <property type="molecule type" value="mRNA"/>
</dbReference>
<dbReference type="CCDS" id="CCDS84963.1">
    <molecule id="P15920-1"/>
</dbReference>
<dbReference type="PIR" id="JH0287">
    <property type="entry name" value="JH0287"/>
</dbReference>
<dbReference type="RefSeq" id="NP_035726.2">
    <molecule id="P15920-1"/>
    <property type="nucleotide sequence ID" value="NM_011596.5"/>
</dbReference>
<dbReference type="PDB" id="2LX4">
    <property type="method" value="NMR"/>
    <property type="chains" value="A=1-17"/>
</dbReference>
<dbReference type="PDBsum" id="2LX4"/>
<dbReference type="BMRB" id="P15920"/>
<dbReference type="SMR" id="P15920"/>
<dbReference type="BioGRID" id="204208">
    <property type="interactions" value="1"/>
</dbReference>
<dbReference type="FunCoup" id="P15920">
    <property type="interactions" value="1911"/>
</dbReference>
<dbReference type="IntAct" id="P15920">
    <property type="interactions" value="1"/>
</dbReference>
<dbReference type="STRING" id="10090.ENSMUSP00000039737"/>
<dbReference type="TCDB" id="3.A.2.2.6">
    <property type="family name" value="the h+- or na+-translocating f-type, v-type and a-type atpase (f-atpase) superfamily"/>
</dbReference>
<dbReference type="GlyGen" id="P15920">
    <property type="glycosylation" value="2 sites, 2 N-linked glycans (2 sites)"/>
</dbReference>
<dbReference type="iPTMnet" id="P15920"/>
<dbReference type="PhosphoSitePlus" id="P15920"/>
<dbReference type="SwissPalm" id="P15920"/>
<dbReference type="jPOST" id="P15920"/>
<dbReference type="PaxDb" id="10090-ENSMUSP00000039737"/>
<dbReference type="PeptideAtlas" id="P15920"/>
<dbReference type="ProteomicsDB" id="300181">
    <molecule id="P15920-1"/>
</dbReference>
<dbReference type="ProteomicsDB" id="300182">
    <molecule id="P15920-2"/>
</dbReference>
<dbReference type="Pumba" id="P15920"/>
<dbReference type="Antibodypedia" id="31833">
    <property type="antibodies" value="104 antibodies from 25 providers"/>
</dbReference>
<dbReference type="DNASU" id="21871"/>
<dbReference type="Ensembl" id="ENSMUST00000037865.13">
    <molecule id="P15920-1"/>
    <property type="protein sequence ID" value="ENSMUSP00000039737.9"/>
    <property type="gene ID" value="ENSMUSG00000038023.13"/>
</dbReference>
<dbReference type="GeneID" id="21871"/>
<dbReference type="KEGG" id="mmu:21871"/>
<dbReference type="UCSC" id="uc008zqn.2">
    <molecule id="P15920-2"/>
    <property type="organism name" value="mouse"/>
</dbReference>
<dbReference type="UCSC" id="uc029voj.2">
    <molecule id="P15920-1"/>
    <property type="organism name" value="mouse"/>
</dbReference>
<dbReference type="AGR" id="MGI:104855"/>
<dbReference type="CTD" id="23545"/>
<dbReference type="MGI" id="MGI:104855">
    <property type="gene designation" value="Atp6v0a2"/>
</dbReference>
<dbReference type="VEuPathDB" id="HostDB:ENSMUSG00000038023"/>
<dbReference type="eggNOG" id="KOG2189">
    <property type="taxonomic scope" value="Eukaryota"/>
</dbReference>
<dbReference type="GeneTree" id="ENSGT00950000182881"/>
<dbReference type="HOGENOM" id="CLU_005230_0_0_1"/>
<dbReference type="InParanoid" id="P15920"/>
<dbReference type="OMA" id="TYVQLYI"/>
<dbReference type="OrthoDB" id="10264220at2759"/>
<dbReference type="PhylomeDB" id="P15920"/>
<dbReference type="TreeFam" id="TF300346"/>
<dbReference type="Reactome" id="R-MMU-1222556">
    <property type="pathway name" value="ROS and RNS production in phagocytes"/>
</dbReference>
<dbReference type="Reactome" id="R-MMU-77387">
    <property type="pathway name" value="Insulin receptor recycling"/>
</dbReference>
<dbReference type="Reactome" id="R-MMU-917977">
    <property type="pathway name" value="Transferrin endocytosis and recycling"/>
</dbReference>
<dbReference type="Reactome" id="R-MMU-983712">
    <property type="pathway name" value="Ion channel transport"/>
</dbReference>
<dbReference type="BioGRID-ORCS" id="21871">
    <property type="hits" value="2 hits in 54 CRISPR screens"/>
</dbReference>
<dbReference type="ChiTaRS" id="Atp6v0a2">
    <property type="organism name" value="mouse"/>
</dbReference>
<dbReference type="PRO" id="PR:P15920"/>
<dbReference type="Proteomes" id="UP000000589">
    <property type="component" value="Chromosome 5"/>
</dbReference>
<dbReference type="RNAct" id="P15920">
    <property type="molecule type" value="protein"/>
</dbReference>
<dbReference type="Bgee" id="ENSMUSG00000038023">
    <property type="expression patterns" value="Expressed in choroid plexus of fourth ventricle and 287 other cell types or tissues"/>
</dbReference>
<dbReference type="ExpressionAtlas" id="P15920">
    <property type="expression patterns" value="baseline and differential"/>
</dbReference>
<dbReference type="GO" id="GO:0001669">
    <property type="term" value="C:acrosomal vesicle"/>
    <property type="evidence" value="ECO:0000314"/>
    <property type="project" value="MGI"/>
</dbReference>
<dbReference type="GO" id="GO:0010008">
    <property type="term" value="C:endosome membrane"/>
    <property type="evidence" value="ECO:0007669"/>
    <property type="project" value="UniProtKB-SubCell"/>
</dbReference>
<dbReference type="GO" id="GO:0005925">
    <property type="term" value="C:focal adhesion"/>
    <property type="evidence" value="ECO:0007669"/>
    <property type="project" value="Ensembl"/>
</dbReference>
<dbReference type="GO" id="GO:0048471">
    <property type="term" value="C:perinuclear region of cytoplasm"/>
    <property type="evidence" value="ECO:0000314"/>
    <property type="project" value="MGI"/>
</dbReference>
<dbReference type="GO" id="GO:0005886">
    <property type="term" value="C:plasma membrane"/>
    <property type="evidence" value="ECO:0007669"/>
    <property type="project" value="UniProtKB-SubCell"/>
</dbReference>
<dbReference type="GO" id="GO:0033176">
    <property type="term" value="C:proton-transporting V-type ATPase complex"/>
    <property type="evidence" value="ECO:0000314"/>
    <property type="project" value="MGI"/>
</dbReference>
<dbReference type="GO" id="GO:0033179">
    <property type="term" value="C:proton-transporting V-type ATPase, V0 domain"/>
    <property type="evidence" value="ECO:0000314"/>
    <property type="project" value="MGI"/>
</dbReference>
<dbReference type="GO" id="GO:0000220">
    <property type="term" value="C:vacuolar proton-transporting V-type ATPase, V0 domain"/>
    <property type="evidence" value="ECO:0007669"/>
    <property type="project" value="InterPro"/>
</dbReference>
<dbReference type="GO" id="GO:0046961">
    <property type="term" value="F:proton-transporting ATPase activity, rotational mechanism"/>
    <property type="evidence" value="ECO:0007669"/>
    <property type="project" value="InterPro"/>
</dbReference>
<dbReference type="GO" id="GO:0036295">
    <property type="term" value="P:cellular response to increased oxygen levels"/>
    <property type="evidence" value="ECO:0000250"/>
    <property type="project" value="UniProtKB"/>
</dbReference>
<dbReference type="GO" id="GO:0006879">
    <property type="term" value="P:intracellular iron ion homeostasis"/>
    <property type="evidence" value="ECO:0000250"/>
    <property type="project" value="UniProtKB"/>
</dbReference>
<dbReference type="InterPro" id="IPR002490">
    <property type="entry name" value="V-ATPase_116kDa_su"/>
</dbReference>
<dbReference type="InterPro" id="IPR026028">
    <property type="entry name" value="V-type_ATPase_116kDa_su_euka"/>
</dbReference>
<dbReference type="PANTHER" id="PTHR11629:SF22">
    <property type="entry name" value="V-TYPE PROTON ATPASE 116 KDA SUBUNIT A 2"/>
    <property type="match status" value="1"/>
</dbReference>
<dbReference type="PANTHER" id="PTHR11629">
    <property type="entry name" value="VACUOLAR PROTON ATPASES"/>
    <property type="match status" value="1"/>
</dbReference>
<dbReference type="Pfam" id="PF01496">
    <property type="entry name" value="V_ATPase_I"/>
    <property type="match status" value="1"/>
</dbReference>
<dbReference type="PIRSF" id="PIRSF001293">
    <property type="entry name" value="ATP6V0A1"/>
    <property type="match status" value="1"/>
</dbReference>
<gene>
    <name type="primary">Atp6v0a2</name>
    <name type="synonym">Atp6n1b</name>
    <name type="synonym">Tj6</name>
</gene>
<protein>
    <recommendedName>
        <fullName>V-type proton ATPase 116 kDa subunit a 2</fullName>
        <shortName>V-ATPase 116 kDa subunit a 2</shortName>
    </recommendedName>
    <alternativeName>
        <fullName>Immune suppressor factor J6B7</fullName>
        <shortName>ISF</shortName>
    </alternativeName>
    <alternativeName>
        <fullName>Lysosomal H(+)-transporting ATPase V0 subunit a 2</fullName>
    </alternativeName>
    <alternativeName>
        <fullName>ShIF</fullName>
    </alternativeName>
    <alternativeName>
        <fullName>Vacuolar proton translocating ATPase 116 kDa subunit a isoform 2</fullName>
    </alternativeName>
</protein>
<reference key="1">
    <citation type="journal article" date="1990" name="Mol. Immunol.">
        <title>Cloning of a cDNA for a T cell produced molecule with a putative immune regulatory role.</title>
        <authorList>
            <person name="Lee C.-K."/>
            <person name="Ghoshal K."/>
            <person name="Beaman K.D."/>
        </authorList>
    </citation>
    <scope>NUCLEOTIDE SEQUENCE [MRNA] (ISOFORM 1)</scope>
</reference>
<reference key="2">
    <citation type="journal article" date="2000" name="J. Biol. Chem.">
        <title>Three subunit a isoforms of mouse vacuolar H+-ATPase. Preferential expression of the a3 isoform during osteoclast differentiation.</title>
        <authorList>
            <person name="Toyomura T."/>
            <person name="Oka T."/>
            <person name="Yamaguchi C."/>
            <person name="Wada Y."/>
            <person name="Futai M."/>
        </authorList>
    </citation>
    <scope>NUCLEOTIDE SEQUENCE [MRNA] (ISOFORM 1)</scope>
</reference>
<reference key="3">
    <citation type="journal article" date="2000" name="J. Biol. Chem.">
        <title>Molecular cloning and expression of three isoforms of the 100-kDa a subunit of the mouse vacuolar proton-translocating ATPase.</title>
        <authorList>
            <person name="Nishi T."/>
            <person name="Forgac M."/>
        </authorList>
    </citation>
    <scope>NUCLEOTIDE SEQUENCE [MRNA] (ISOFORM 1)</scope>
    <source>
        <tissue>Brain</tissue>
        <tissue>Heart</tissue>
    </source>
</reference>
<reference key="4">
    <citation type="journal article" date="2005" name="Science">
        <title>The transcriptional landscape of the mammalian genome.</title>
        <authorList>
            <person name="Carninci P."/>
            <person name="Kasukawa T."/>
            <person name="Katayama S."/>
            <person name="Gough J."/>
            <person name="Frith M.C."/>
            <person name="Maeda N."/>
            <person name="Oyama R."/>
            <person name="Ravasi T."/>
            <person name="Lenhard B."/>
            <person name="Wells C."/>
            <person name="Kodzius R."/>
            <person name="Shimokawa K."/>
            <person name="Bajic V.B."/>
            <person name="Brenner S.E."/>
            <person name="Batalov S."/>
            <person name="Forrest A.R."/>
            <person name="Zavolan M."/>
            <person name="Davis M.J."/>
            <person name="Wilming L.G."/>
            <person name="Aidinis V."/>
            <person name="Allen J.E."/>
            <person name="Ambesi-Impiombato A."/>
            <person name="Apweiler R."/>
            <person name="Aturaliya R.N."/>
            <person name="Bailey T.L."/>
            <person name="Bansal M."/>
            <person name="Baxter L."/>
            <person name="Beisel K.W."/>
            <person name="Bersano T."/>
            <person name="Bono H."/>
            <person name="Chalk A.M."/>
            <person name="Chiu K.P."/>
            <person name="Choudhary V."/>
            <person name="Christoffels A."/>
            <person name="Clutterbuck D.R."/>
            <person name="Crowe M.L."/>
            <person name="Dalla E."/>
            <person name="Dalrymple B.P."/>
            <person name="de Bono B."/>
            <person name="Della Gatta G."/>
            <person name="di Bernardo D."/>
            <person name="Down T."/>
            <person name="Engstrom P."/>
            <person name="Fagiolini M."/>
            <person name="Faulkner G."/>
            <person name="Fletcher C.F."/>
            <person name="Fukushima T."/>
            <person name="Furuno M."/>
            <person name="Futaki S."/>
            <person name="Gariboldi M."/>
            <person name="Georgii-Hemming P."/>
            <person name="Gingeras T.R."/>
            <person name="Gojobori T."/>
            <person name="Green R.E."/>
            <person name="Gustincich S."/>
            <person name="Harbers M."/>
            <person name="Hayashi Y."/>
            <person name="Hensch T.K."/>
            <person name="Hirokawa N."/>
            <person name="Hill D."/>
            <person name="Huminiecki L."/>
            <person name="Iacono M."/>
            <person name="Ikeo K."/>
            <person name="Iwama A."/>
            <person name="Ishikawa T."/>
            <person name="Jakt M."/>
            <person name="Kanapin A."/>
            <person name="Katoh M."/>
            <person name="Kawasawa Y."/>
            <person name="Kelso J."/>
            <person name="Kitamura H."/>
            <person name="Kitano H."/>
            <person name="Kollias G."/>
            <person name="Krishnan S.P."/>
            <person name="Kruger A."/>
            <person name="Kummerfeld S.K."/>
            <person name="Kurochkin I.V."/>
            <person name="Lareau L.F."/>
            <person name="Lazarevic D."/>
            <person name="Lipovich L."/>
            <person name="Liu J."/>
            <person name="Liuni S."/>
            <person name="McWilliam S."/>
            <person name="Madan Babu M."/>
            <person name="Madera M."/>
            <person name="Marchionni L."/>
            <person name="Matsuda H."/>
            <person name="Matsuzawa S."/>
            <person name="Miki H."/>
            <person name="Mignone F."/>
            <person name="Miyake S."/>
            <person name="Morris K."/>
            <person name="Mottagui-Tabar S."/>
            <person name="Mulder N."/>
            <person name="Nakano N."/>
            <person name="Nakauchi H."/>
            <person name="Ng P."/>
            <person name="Nilsson R."/>
            <person name="Nishiguchi S."/>
            <person name="Nishikawa S."/>
            <person name="Nori F."/>
            <person name="Ohara O."/>
            <person name="Okazaki Y."/>
            <person name="Orlando V."/>
            <person name="Pang K.C."/>
            <person name="Pavan W.J."/>
            <person name="Pavesi G."/>
            <person name="Pesole G."/>
            <person name="Petrovsky N."/>
            <person name="Piazza S."/>
            <person name="Reed J."/>
            <person name="Reid J.F."/>
            <person name="Ring B.Z."/>
            <person name="Ringwald M."/>
            <person name="Rost B."/>
            <person name="Ruan Y."/>
            <person name="Salzberg S.L."/>
            <person name="Sandelin A."/>
            <person name="Schneider C."/>
            <person name="Schoenbach C."/>
            <person name="Sekiguchi K."/>
            <person name="Semple C.A."/>
            <person name="Seno S."/>
            <person name="Sessa L."/>
            <person name="Sheng Y."/>
            <person name="Shibata Y."/>
            <person name="Shimada H."/>
            <person name="Shimada K."/>
            <person name="Silva D."/>
            <person name="Sinclair B."/>
            <person name="Sperling S."/>
            <person name="Stupka E."/>
            <person name="Sugiura K."/>
            <person name="Sultana R."/>
            <person name="Takenaka Y."/>
            <person name="Taki K."/>
            <person name="Tammoja K."/>
            <person name="Tan S.L."/>
            <person name="Tang S."/>
            <person name="Taylor M.S."/>
            <person name="Tegner J."/>
            <person name="Teichmann S.A."/>
            <person name="Ueda H.R."/>
            <person name="van Nimwegen E."/>
            <person name="Verardo R."/>
            <person name="Wei C.L."/>
            <person name="Yagi K."/>
            <person name="Yamanishi H."/>
            <person name="Zabarovsky E."/>
            <person name="Zhu S."/>
            <person name="Zimmer A."/>
            <person name="Hide W."/>
            <person name="Bult C."/>
            <person name="Grimmond S.M."/>
            <person name="Teasdale R.D."/>
            <person name="Liu E.T."/>
            <person name="Brusic V."/>
            <person name="Quackenbush J."/>
            <person name="Wahlestedt C."/>
            <person name="Mattick J.S."/>
            <person name="Hume D.A."/>
            <person name="Kai C."/>
            <person name="Sasaki D."/>
            <person name="Tomaru Y."/>
            <person name="Fukuda S."/>
            <person name="Kanamori-Katayama M."/>
            <person name="Suzuki M."/>
            <person name="Aoki J."/>
            <person name="Arakawa T."/>
            <person name="Iida J."/>
            <person name="Imamura K."/>
            <person name="Itoh M."/>
            <person name="Kato T."/>
            <person name="Kawaji H."/>
            <person name="Kawagashira N."/>
            <person name="Kawashima T."/>
            <person name="Kojima M."/>
            <person name="Kondo S."/>
            <person name="Konno H."/>
            <person name="Nakano K."/>
            <person name="Ninomiya N."/>
            <person name="Nishio T."/>
            <person name="Okada M."/>
            <person name="Plessy C."/>
            <person name="Shibata K."/>
            <person name="Shiraki T."/>
            <person name="Suzuki S."/>
            <person name="Tagami M."/>
            <person name="Waki K."/>
            <person name="Watahiki A."/>
            <person name="Okamura-Oho Y."/>
            <person name="Suzuki H."/>
            <person name="Kawai J."/>
            <person name="Hayashizaki Y."/>
        </authorList>
    </citation>
    <scope>NUCLEOTIDE SEQUENCE [LARGE SCALE MRNA] (ISOFORMS 1 AND 2)</scope>
    <source>
        <strain>NOD</strain>
        <tissue>Dendritic cell</tissue>
        <tissue>Wolffian duct</tissue>
    </source>
</reference>
<reference key="5">
    <citation type="journal article" date="2004" name="Genome Res.">
        <title>The status, quality, and expansion of the NIH full-length cDNA project: the Mammalian Gene Collection (MGC).</title>
        <authorList>
            <consortium name="The MGC Project Team"/>
        </authorList>
    </citation>
    <scope>NUCLEOTIDE SEQUENCE [LARGE SCALE MRNA] (ISOFORM 1)</scope>
    <source>
        <tissue>Mammary tumor</tissue>
    </source>
</reference>
<reference key="6">
    <citation type="journal article" date="2001" name="J. Biol. Chem.">
        <title>A novel secreted form of immune suppressor factor with high homology to vacuolar ATPases identified by a forward genetic approach of functional screening based on cell proliferation.</title>
        <authorList>
            <person name="Tulin E.E."/>
            <person name="Onoda N."/>
            <person name="Maeda M."/>
            <person name="Hasegawa M."/>
            <person name="Nosaka T."/>
            <person name="Nomura H."/>
            <person name="Asano S."/>
            <person name="Kitamura T."/>
        </authorList>
    </citation>
    <scope>NUCLEOTIDE SEQUENCE [MRNA] OF 569-856</scope>
    <scope>TISSUE SPECIFICITY</scope>
</reference>
<reference key="7">
    <citation type="journal article" date="2006" name="Nat. Cell Biol.">
        <title>V-ATPase interacts with ARNO and Arf6 in early endosomes and regulates the protein degradative pathway.</title>
        <authorList>
            <person name="Hurtado-Lorenzo A."/>
            <person name="Skinner M."/>
            <person name="El Annan J."/>
            <person name="Futai M."/>
            <person name="Sun-Wada G.-H."/>
            <person name="Bourgoin S."/>
            <person name="Casanova J."/>
            <person name="Wildeman A."/>
            <person name="Bechoua S."/>
            <person name="Ausiello D.A."/>
            <person name="Brown D."/>
            <person name="Marshansky V."/>
        </authorList>
    </citation>
    <scope>FUNCTION</scope>
    <scope>SUBCELLULAR LOCATION</scope>
    <scope>INTERACTION WITH PSCD2</scope>
</reference>
<reference key="8">
    <citation type="journal article" date="2007" name="Proc. Natl. Acad. Sci. U.S.A.">
        <title>Large-scale phosphorylation analysis of mouse liver.</title>
        <authorList>
            <person name="Villen J."/>
            <person name="Beausoleil S.A."/>
            <person name="Gerber S.A."/>
            <person name="Gygi S.P."/>
        </authorList>
    </citation>
    <scope>PHOSPHORYLATION [LARGE SCALE ANALYSIS] AT SER-695 AND SER-700</scope>
    <scope>IDENTIFICATION BY MASS SPECTROMETRY [LARGE SCALE ANALYSIS]</scope>
    <source>
        <tissue>Liver</tissue>
    </source>
</reference>
<reference key="9">
    <citation type="journal article" date="2010" name="Cell">
        <title>A tissue-specific atlas of mouse protein phosphorylation and expression.</title>
        <authorList>
            <person name="Huttlin E.L."/>
            <person name="Jedrychowski M.P."/>
            <person name="Elias J.E."/>
            <person name="Goswami T."/>
            <person name="Rad R."/>
            <person name="Beausoleil S.A."/>
            <person name="Villen J."/>
            <person name="Haas W."/>
            <person name="Sowa M.E."/>
            <person name="Gygi S.P."/>
        </authorList>
    </citation>
    <scope>PHOSPHORYLATION [LARGE SCALE ANALYSIS] AT SER-695 AND SER-700</scope>
    <scope>IDENTIFICATION BY MASS SPECTROMETRY [LARGE SCALE ANALYSIS]</scope>
    <source>
        <tissue>Brain</tissue>
        <tissue>Brown adipose tissue</tissue>
        <tissue>Heart</tissue>
        <tissue>Kidney</tissue>
        <tissue>Liver</tissue>
        <tissue>Lung</tissue>
        <tissue>Pancreas</tissue>
        <tissue>Spleen</tissue>
        <tissue>Testis</tissue>
    </source>
</reference>
<proteinExistence type="evidence at protein level"/>